<sequence length="377" mass="42252">MASVNWADDRAARKKFPPPSFYMPLLVSSDKAPYRVIPRNLVPIGKGNKDEQIGYWNVQERWRMRRGQRVDLPPKVHFYYLGTGPHKDLKFRQRSDGVVWVAKEGAKTVNTSLGNRKRNQKPLEPKFSIALPPELSVVEFEDRSNNSSRASSRSSTRNNSRDSSRSTSRQQSRTRSDSNQSSSDLVAAVTLALKNLGFDNQSKSPSSSGTSTPKKPNKPLSQPRADKPSQLKKPRWKRVPTREENVIQCFGPRDFNHNMGDSDLVQNGVDAKGFPQLAELIPNQAALFFDSEVSTDEVGDNVQITYTYKMLVAKDNKNLPKFIEQISAFTKPSSIKEMQSQSSHVAQNTVLNASIPESKPLADDDSAIIEIVNEVLH</sequence>
<evidence type="ECO:0000255" key="1">
    <source>
        <dbReference type="HAMAP-Rule" id="MF_04095"/>
    </source>
</evidence>
<evidence type="ECO:0000255" key="2">
    <source>
        <dbReference type="PROSITE-ProRule" id="PRU01276"/>
    </source>
</evidence>
<evidence type="ECO:0000255" key="3">
    <source>
        <dbReference type="PROSITE-ProRule" id="PRU01277"/>
    </source>
</evidence>
<evidence type="ECO:0000256" key="4">
    <source>
        <dbReference type="SAM" id="MobiDB-lite"/>
    </source>
</evidence>
<evidence type="ECO:0000269" key="5">
    <source>
    </source>
</evidence>
<evidence type="ECO:0007829" key="6">
    <source>
        <dbReference type="PDB" id="5EPW"/>
    </source>
</evidence>
<evidence type="ECO:0007829" key="7">
    <source>
        <dbReference type="PDB" id="5N4K"/>
    </source>
</evidence>
<protein>
    <recommendedName>
        <fullName evidence="1">Nucleoprotein</fullName>
    </recommendedName>
    <alternativeName>
        <fullName evidence="1">Nucleocapsid protein</fullName>
        <shortName evidence="1">NC</shortName>
        <shortName evidence="1">Protein N</shortName>
    </alternativeName>
</protein>
<comment type="function">
    <text evidence="1">Packages the positive strand viral genome RNA into a helical ribonucleocapsid (RNP) and plays a fundamental role during virion assembly through its interactions with the viral genome and membrane protein M. Plays an important role in enhancing the efficiency of subgenomic viral RNA transcription as well as viral replication.</text>
</comment>
<comment type="subunit">
    <text evidence="1 5">Homooligomer. Both monomeric and oligomeric forms interact with RNA. Interacts with protein M. Interacts with NSP3; this interaction serves to tether the genome to the newly translated replicase-transcriptase complex at a very early stage of infection.</text>
</comment>
<comment type="subcellular location">
    <subcellularLocation>
        <location evidence="1">Virion</location>
    </subcellularLocation>
    <subcellularLocation>
        <location evidence="1">Host endoplasmic reticulum-Golgi intermediate compartment</location>
    </subcellularLocation>
    <subcellularLocation>
        <location evidence="1">Host Golgi apparatus</location>
    </subcellularLocation>
    <text evidence="1">Located inside the virion, complexed with the viral RNA. Probably associates with ER-derived membranes where it participates in viral RNA synthesis and virus budding.</text>
</comment>
<comment type="PTM">
    <text evidence="1">ADP-ribosylated. The ADP-ribosylation is retained in the virion during infection.</text>
</comment>
<comment type="PTM">
    <text evidence="1">Phosphorylated on serine and threonine residues.</text>
</comment>
<comment type="similarity">
    <text evidence="1">Belongs to the alphacoronavirus nucleocapsid protein family.</text>
</comment>
<proteinExistence type="evidence at protein level"/>
<organism>
    <name type="scientific">Human coronavirus NL63</name>
    <name type="common">HCoV-NL63</name>
    <dbReference type="NCBI Taxonomy" id="277944"/>
    <lineage>
        <taxon>Viruses</taxon>
        <taxon>Riboviria</taxon>
        <taxon>Orthornavirae</taxon>
        <taxon>Pisuviricota</taxon>
        <taxon>Pisoniviricetes</taxon>
        <taxon>Nidovirales</taxon>
        <taxon>Cornidovirineae</taxon>
        <taxon>Coronaviridae</taxon>
        <taxon>Orthocoronavirinae</taxon>
        <taxon>Alphacoronavirus</taxon>
        <taxon>Setracovirus</taxon>
    </lineage>
</organism>
<accession>Q6Q1R8</accession>
<reference key="1">
    <citation type="journal article" date="2004" name="Nat. Med.">
        <title>Identification of a new human coronavirus.</title>
        <authorList>
            <person name="Van Der Hoek L."/>
            <person name="Pyrc K."/>
            <person name="Jebbink M.F."/>
            <person name="Vermeulen-Oost W."/>
            <person name="Berkhout R.J."/>
            <person name="Wolthers K.C."/>
            <person name="Wertheim-Van Dillen P.M."/>
            <person name="Kaandorp J."/>
            <person name="Spaargaren J."/>
            <person name="Berkhout B."/>
        </authorList>
    </citation>
    <scope>NUCLEOTIDE SEQUENCE [GENOMIC RNA]</scope>
    <source>
        <strain>Isolate Amsterdam I</strain>
    </source>
</reference>
<reference key="2">
    <citation type="journal article" date="2015" name="PLoS ONE">
        <title>The nucleocapsid protein of human coronavirus NL63.</title>
        <authorList>
            <person name="Zuwala K."/>
            <person name="Golda A."/>
            <person name="Kabala W."/>
            <person name="Burmistrz M."/>
            <person name="Zdzalik M."/>
            <person name="Nowak P."/>
            <person name="Kedracka-Krok S."/>
            <person name="Zarebski M."/>
            <person name="Dobrucki J."/>
            <person name="Florek D."/>
            <person name="Zeglen S."/>
            <person name="Wojarski J."/>
            <person name="Potempa J."/>
            <person name="Dubin G."/>
            <person name="Pyrc K."/>
        </authorList>
    </citation>
    <scope>SUBUNIT</scope>
    <scope>SUBCELLULAR LOCATION</scope>
</reference>
<keyword id="KW-0002">3D-structure</keyword>
<keyword id="KW-0013">ADP-ribosylation</keyword>
<keyword id="KW-1040">Host Golgi apparatus</keyword>
<keyword id="KW-0597">Phosphoprotein</keyword>
<keyword id="KW-1185">Reference proteome</keyword>
<keyword id="KW-0687">Ribonucleoprotein</keyword>
<keyword id="KW-0694">RNA-binding</keyword>
<keyword id="KW-0804">Transcription</keyword>
<keyword id="KW-0805">Transcription regulation</keyword>
<keyword id="KW-0543">Viral nucleoprotein</keyword>
<keyword id="KW-0946">Virion</keyword>
<organismHost>
    <name type="scientific">Homo sapiens</name>
    <name type="common">Human</name>
    <dbReference type="NCBI Taxonomy" id="9606"/>
</organismHost>
<feature type="chain" id="PRO_0000283928" description="Nucleoprotein">
    <location>
        <begin position="1"/>
        <end position="377"/>
    </location>
</feature>
<feature type="domain" description="CoV N NTD" evidence="2">
    <location>
        <begin position="17"/>
        <end position="139"/>
    </location>
</feature>
<feature type="domain" description="CoV N CTD" evidence="3">
    <location>
        <begin position="223"/>
        <end position="337"/>
    </location>
</feature>
<feature type="region of interest" description="RNA-binding" evidence="1">
    <location>
        <begin position="19"/>
        <end position="151"/>
    </location>
</feature>
<feature type="region of interest" description="Disordered" evidence="4">
    <location>
        <begin position="140"/>
        <end position="183"/>
    </location>
</feature>
<feature type="region of interest" description="Disordered" evidence="4">
    <location>
        <begin position="196"/>
        <end position="244"/>
    </location>
</feature>
<feature type="region of interest" description="Dimerization" evidence="1">
    <location>
        <begin position="230"/>
        <end position="334"/>
    </location>
</feature>
<feature type="compositionally biased region" description="Low complexity" evidence="4">
    <location>
        <begin position="145"/>
        <end position="158"/>
    </location>
</feature>
<feature type="compositionally biased region" description="Low complexity" evidence="4">
    <location>
        <begin position="165"/>
        <end position="183"/>
    </location>
</feature>
<feature type="compositionally biased region" description="Low complexity" evidence="4">
    <location>
        <begin position="202"/>
        <end position="214"/>
    </location>
</feature>
<feature type="compositionally biased region" description="Basic residues" evidence="4">
    <location>
        <begin position="230"/>
        <end position="239"/>
    </location>
</feature>
<feature type="modified residue" description="Phosphoserine; by host" evidence="1">
    <location>
        <position position="148"/>
    </location>
</feature>
<feature type="strand" evidence="7">
    <location>
        <begin position="25"/>
        <end position="27"/>
    </location>
</feature>
<feature type="strand" evidence="7">
    <location>
        <begin position="29"/>
        <end position="31"/>
    </location>
</feature>
<feature type="helix" evidence="7">
    <location>
        <begin position="33"/>
        <end position="36"/>
    </location>
</feature>
<feature type="strand" evidence="7">
    <location>
        <begin position="44"/>
        <end position="47"/>
    </location>
</feature>
<feature type="helix" evidence="7">
    <location>
        <begin position="49"/>
        <end position="51"/>
    </location>
</feature>
<feature type="strand" evidence="7">
    <location>
        <begin position="53"/>
        <end position="63"/>
    </location>
</feature>
<feature type="strand" evidence="7">
    <location>
        <begin position="70"/>
        <end position="80"/>
    </location>
</feature>
<feature type="turn" evidence="7">
    <location>
        <begin position="85"/>
        <end position="88"/>
    </location>
</feature>
<feature type="strand" evidence="7">
    <location>
        <begin position="98"/>
        <end position="102"/>
    </location>
</feature>
<feature type="strand" evidence="7">
    <location>
        <begin position="135"/>
        <end position="137"/>
    </location>
</feature>
<feature type="helix" evidence="6">
    <location>
        <begin position="230"/>
        <end position="232"/>
    </location>
</feature>
<feature type="helix" evidence="6">
    <location>
        <begin position="235"/>
        <end position="237"/>
    </location>
</feature>
<feature type="strand" evidence="6">
    <location>
        <begin position="241"/>
        <end position="244"/>
    </location>
</feature>
<feature type="helix" evidence="6">
    <location>
        <begin position="246"/>
        <end position="249"/>
    </location>
</feature>
<feature type="helix" evidence="6">
    <location>
        <begin position="262"/>
        <end position="267"/>
    </location>
</feature>
<feature type="helix" evidence="6">
    <location>
        <begin position="274"/>
        <end position="278"/>
    </location>
</feature>
<feature type="helix" evidence="6">
    <location>
        <begin position="284"/>
        <end position="290"/>
    </location>
</feature>
<feature type="strand" evidence="6">
    <location>
        <begin position="291"/>
        <end position="298"/>
    </location>
</feature>
<feature type="strand" evidence="6">
    <location>
        <begin position="301"/>
        <end position="313"/>
    </location>
</feature>
<feature type="helix" evidence="6">
    <location>
        <begin position="319"/>
        <end position="325"/>
    </location>
</feature>
<feature type="helix" evidence="6">
    <location>
        <begin position="328"/>
        <end position="330"/>
    </location>
</feature>
<gene>
    <name evidence="1" type="primary">N</name>
    <name type="ORF">6</name>
</gene>
<name>NCAP_CVHNL</name>
<dbReference type="EMBL" id="AY567487">
    <property type="protein sequence ID" value="AAS58181.1"/>
    <property type="molecule type" value="Genomic_RNA"/>
</dbReference>
<dbReference type="RefSeq" id="YP_003771.1">
    <property type="nucleotide sequence ID" value="NC_005831.2"/>
</dbReference>
<dbReference type="PDB" id="5EPW">
    <property type="method" value="X-ray"/>
    <property type="resolution" value="1.50 A"/>
    <property type="chains" value="A/B=221-340"/>
</dbReference>
<dbReference type="PDB" id="5N4K">
    <property type="method" value="X-ray"/>
    <property type="resolution" value="1.49 A"/>
    <property type="chains" value="A/B=2-140"/>
</dbReference>
<dbReference type="PDBsum" id="5EPW"/>
<dbReference type="PDBsum" id="5N4K"/>
<dbReference type="SMR" id="Q6Q1R8"/>
<dbReference type="IntAct" id="Q6Q1R8">
    <property type="interactions" value="226"/>
</dbReference>
<dbReference type="DNASU" id="2943504"/>
<dbReference type="GeneID" id="2943504"/>
<dbReference type="KEGG" id="vg:2943504"/>
<dbReference type="OrthoDB" id="3036at10239"/>
<dbReference type="Proteomes" id="UP000008573">
    <property type="component" value="Genome"/>
</dbReference>
<dbReference type="GO" id="GO:0030430">
    <property type="term" value="C:host cell cytoplasm"/>
    <property type="evidence" value="ECO:0000314"/>
    <property type="project" value="UniProtKB"/>
</dbReference>
<dbReference type="GO" id="GO:0044172">
    <property type="term" value="C:host cell endoplasmic reticulum-Golgi intermediate compartment"/>
    <property type="evidence" value="ECO:0007669"/>
    <property type="project" value="UniProtKB-SubCell"/>
</dbReference>
<dbReference type="GO" id="GO:0044177">
    <property type="term" value="C:host cell Golgi apparatus"/>
    <property type="evidence" value="ECO:0007669"/>
    <property type="project" value="UniProtKB-SubCell"/>
</dbReference>
<dbReference type="GO" id="GO:1990904">
    <property type="term" value="C:ribonucleoprotein complex"/>
    <property type="evidence" value="ECO:0007669"/>
    <property type="project" value="UniProtKB-KW"/>
</dbReference>
<dbReference type="GO" id="GO:0019013">
    <property type="term" value="C:viral nucleocapsid"/>
    <property type="evidence" value="ECO:0007669"/>
    <property type="project" value="UniProtKB-KW"/>
</dbReference>
<dbReference type="GO" id="GO:0003677">
    <property type="term" value="F:DNA binding"/>
    <property type="evidence" value="ECO:0000314"/>
    <property type="project" value="UniProtKB"/>
</dbReference>
<dbReference type="GO" id="GO:0003723">
    <property type="term" value="F:RNA binding"/>
    <property type="evidence" value="ECO:0000314"/>
    <property type="project" value="UniProtKB"/>
</dbReference>
<dbReference type="CDD" id="cd21595">
    <property type="entry name" value="CoV_N-CTD"/>
    <property type="match status" value="1"/>
</dbReference>
<dbReference type="CDD" id="cd21554">
    <property type="entry name" value="CoV_N-NTD"/>
    <property type="match status" value="1"/>
</dbReference>
<dbReference type="HAMAP" id="MF_04095">
    <property type="entry name" value="ALPHA_CORONA_NCAP"/>
    <property type="match status" value="1"/>
</dbReference>
<dbReference type="InterPro" id="IPR044344">
    <property type="entry name" value="N_prot_C_CoV"/>
</dbReference>
<dbReference type="InterPro" id="IPR044345">
    <property type="entry name" value="N_prot_N_CoV"/>
</dbReference>
<dbReference type="InterPro" id="IPR042548">
    <property type="entry name" value="NCAP_aCoV"/>
</dbReference>
<dbReference type="InterPro" id="IPR001218">
    <property type="entry name" value="Nucleocap_CoV"/>
</dbReference>
<dbReference type="InterPro" id="IPR037179">
    <property type="entry name" value="Nucleocapsid_C"/>
</dbReference>
<dbReference type="InterPro" id="IPR037195">
    <property type="entry name" value="Nucleocapsid_N"/>
</dbReference>
<dbReference type="Pfam" id="PF00937">
    <property type="entry name" value="CoV_nucleocap"/>
    <property type="match status" value="1"/>
</dbReference>
<dbReference type="PIRSF" id="PIRSF003888">
    <property type="entry name" value="Corona_nucleocap"/>
    <property type="match status" value="1"/>
</dbReference>
<dbReference type="SUPFAM" id="SSF110304">
    <property type="entry name" value="Coronavirus RNA-binding domain"/>
    <property type="match status" value="1"/>
</dbReference>
<dbReference type="SUPFAM" id="SSF103068">
    <property type="entry name" value="Nucleocapsid protein dimerization domain"/>
    <property type="match status" value="1"/>
</dbReference>
<dbReference type="PROSITE" id="PS51929">
    <property type="entry name" value="COV_N_CTD"/>
    <property type="match status" value="1"/>
</dbReference>
<dbReference type="PROSITE" id="PS51928">
    <property type="entry name" value="COV_N_NTD"/>
    <property type="match status" value="1"/>
</dbReference>